<name>RL34_BORA1</name>
<dbReference type="EMBL" id="AM167904">
    <property type="protein sequence ID" value="CAJ51023.1"/>
    <property type="molecule type" value="Genomic_DNA"/>
</dbReference>
<dbReference type="RefSeq" id="WP_012419049.1">
    <property type="nucleotide sequence ID" value="NC_010645.1"/>
</dbReference>
<dbReference type="SMR" id="Q2KTI8"/>
<dbReference type="STRING" id="360910.BAV3413"/>
<dbReference type="GeneID" id="92936772"/>
<dbReference type="KEGG" id="bav:BAV3413"/>
<dbReference type="eggNOG" id="COG0230">
    <property type="taxonomic scope" value="Bacteria"/>
</dbReference>
<dbReference type="HOGENOM" id="CLU_129938_2_0_4"/>
<dbReference type="OrthoDB" id="9804164at2"/>
<dbReference type="Proteomes" id="UP000001977">
    <property type="component" value="Chromosome"/>
</dbReference>
<dbReference type="GO" id="GO:1990904">
    <property type="term" value="C:ribonucleoprotein complex"/>
    <property type="evidence" value="ECO:0007669"/>
    <property type="project" value="UniProtKB-KW"/>
</dbReference>
<dbReference type="GO" id="GO:0005840">
    <property type="term" value="C:ribosome"/>
    <property type="evidence" value="ECO:0007669"/>
    <property type="project" value="UniProtKB-KW"/>
</dbReference>
<dbReference type="GO" id="GO:0003735">
    <property type="term" value="F:structural constituent of ribosome"/>
    <property type="evidence" value="ECO:0007669"/>
    <property type="project" value="InterPro"/>
</dbReference>
<dbReference type="GO" id="GO:0006412">
    <property type="term" value="P:translation"/>
    <property type="evidence" value="ECO:0007669"/>
    <property type="project" value="UniProtKB-UniRule"/>
</dbReference>
<dbReference type="FunFam" id="1.10.287.3980:FF:000001">
    <property type="entry name" value="Mitochondrial ribosomal protein L34"/>
    <property type="match status" value="1"/>
</dbReference>
<dbReference type="Gene3D" id="1.10.287.3980">
    <property type="match status" value="1"/>
</dbReference>
<dbReference type="HAMAP" id="MF_00391">
    <property type="entry name" value="Ribosomal_bL34"/>
    <property type="match status" value="1"/>
</dbReference>
<dbReference type="InterPro" id="IPR000271">
    <property type="entry name" value="Ribosomal_bL34"/>
</dbReference>
<dbReference type="InterPro" id="IPR020939">
    <property type="entry name" value="Ribosomal_bL34_CS"/>
</dbReference>
<dbReference type="NCBIfam" id="TIGR01030">
    <property type="entry name" value="rpmH_bact"/>
    <property type="match status" value="1"/>
</dbReference>
<dbReference type="PANTHER" id="PTHR14503:SF4">
    <property type="entry name" value="LARGE RIBOSOMAL SUBUNIT PROTEIN BL34M"/>
    <property type="match status" value="1"/>
</dbReference>
<dbReference type="PANTHER" id="PTHR14503">
    <property type="entry name" value="MITOCHONDRIAL RIBOSOMAL PROTEIN 34 FAMILY MEMBER"/>
    <property type="match status" value="1"/>
</dbReference>
<dbReference type="Pfam" id="PF00468">
    <property type="entry name" value="Ribosomal_L34"/>
    <property type="match status" value="1"/>
</dbReference>
<dbReference type="PROSITE" id="PS00784">
    <property type="entry name" value="RIBOSOMAL_L34"/>
    <property type="match status" value="1"/>
</dbReference>
<organism>
    <name type="scientific">Bordetella avium (strain 197N)</name>
    <dbReference type="NCBI Taxonomy" id="360910"/>
    <lineage>
        <taxon>Bacteria</taxon>
        <taxon>Pseudomonadati</taxon>
        <taxon>Pseudomonadota</taxon>
        <taxon>Betaproteobacteria</taxon>
        <taxon>Burkholderiales</taxon>
        <taxon>Alcaligenaceae</taxon>
        <taxon>Bordetella</taxon>
    </lineage>
</organism>
<comment type="similarity">
    <text evidence="1">Belongs to the bacterial ribosomal protein bL34 family.</text>
</comment>
<accession>Q2KTI8</accession>
<reference key="1">
    <citation type="journal article" date="2006" name="J. Bacteriol.">
        <title>Comparison of the genome sequence of the poultry pathogen Bordetella avium with those of B. bronchiseptica, B. pertussis, and B. parapertussis reveals extensive diversity in surface structures associated with host interaction.</title>
        <authorList>
            <person name="Sebaihia M."/>
            <person name="Preston A."/>
            <person name="Maskell D.J."/>
            <person name="Kuzmiak H."/>
            <person name="Connell T.D."/>
            <person name="King N.D."/>
            <person name="Orndorff P.E."/>
            <person name="Miyamoto D.M."/>
            <person name="Thomson N.R."/>
            <person name="Harris D."/>
            <person name="Goble A."/>
            <person name="Lord A."/>
            <person name="Murphy L."/>
            <person name="Quail M.A."/>
            <person name="Rutter S."/>
            <person name="Squares R."/>
            <person name="Squares S."/>
            <person name="Woodward J."/>
            <person name="Parkhill J."/>
            <person name="Temple L.M."/>
        </authorList>
    </citation>
    <scope>NUCLEOTIDE SEQUENCE [LARGE SCALE GENOMIC DNA]</scope>
    <source>
        <strain>197N</strain>
    </source>
</reference>
<gene>
    <name evidence="1" type="primary">rpmH</name>
    <name type="ordered locus">BAV3413</name>
</gene>
<keyword id="KW-1185">Reference proteome</keyword>
<keyword id="KW-0687">Ribonucleoprotein</keyword>
<keyword id="KW-0689">Ribosomal protein</keyword>
<protein>
    <recommendedName>
        <fullName evidence="1">Large ribosomal subunit protein bL34</fullName>
    </recommendedName>
    <alternativeName>
        <fullName evidence="2">50S ribosomal protein L34</fullName>
    </alternativeName>
</protein>
<evidence type="ECO:0000255" key="1">
    <source>
        <dbReference type="HAMAP-Rule" id="MF_00391"/>
    </source>
</evidence>
<evidence type="ECO:0000305" key="2"/>
<feature type="chain" id="PRO_1000013287" description="Large ribosomal subunit protein bL34">
    <location>
        <begin position="1"/>
        <end position="44"/>
    </location>
</feature>
<proteinExistence type="inferred from homology"/>
<sequence length="44" mass="5223">MKRTYQPSVTRRKRTHGFRVRMKTRGGRAILNARRAKGRKRLAV</sequence>